<comment type="function">
    <text evidence="1">Involved in chemotaxis. Part of a chemotaxis signal transduction system that modulates chemotaxis in response to various stimuli. Catalyzes the demethylation of specific methylglutamate residues introduced into the chemoreceptors (methyl-accepting chemotaxis proteins or MCP) by CheR. Also mediates the irreversible deamidation of specific glutamine residues to glutamic acid.</text>
</comment>
<comment type="catalytic activity">
    <reaction evidence="1">
        <text>[protein]-L-glutamate 5-O-methyl ester + H2O = L-glutamyl-[protein] + methanol + H(+)</text>
        <dbReference type="Rhea" id="RHEA:23236"/>
        <dbReference type="Rhea" id="RHEA-COMP:10208"/>
        <dbReference type="Rhea" id="RHEA-COMP:10311"/>
        <dbReference type="ChEBI" id="CHEBI:15377"/>
        <dbReference type="ChEBI" id="CHEBI:15378"/>
        <dbReference type="ChEBI" id="CHEBI:17790"/>
        <dbReference type="ChEBI" id="CHEBI:29973"/>
        <dbReference type="ChEBI" id="CHEBI:82795"/>
        <dbReference type="EC" id="3.1.1.61"/>
    </reaction>
</comment>
<comment type="catalytic activity">
    <reaction evidence="1">
        <text>L-glutaminyl-[protein] + H2O = L-glutamyl-[protein] + NH4(+)</text>
        <dbReference type="Rhea" id="RHEA:16441"/>
        <dbReference type="Rhea" id="RHEA-COMP:10207"/>
        <dbReference type="Rhea" id="RHEA-COMP:10208"/>
        <dbReference type="ChEBI" id="CHEBI:15377"/>
        <dbReference type="ChEBI" id="CHEBI:28938"/>
        <dbReference type="ChEBI" id="CHEBI:29973"/>
        <dbReference type="ChEBI" id="CHEBI:30011"/>
        <dbReference type="EC" id="3.5.1.44"/>
    </reaction>
</comment>
<comment type="subcellular location">
    <subcellularLocation>
        <location evidence="1">Cytoplasm</location>
    </subcellularLocation>
</comment>
<comment type="domain">
    <text evidence="1">Contains a C-terminal catalytic domain, and an N-terminal region which modulates catalytic activity.</text>
</comment>
<comment type="PTM">
    <text evidence="1">Phosphorylated by CheA. Phosphorylation of the N-terminal regulatory domain activates the methylesterase activity.</text>
</comment>
<comment type="similarity">
    <text evidence="1">Belongs to the CheB family.</text>
</comment>
<dbReference type="EC" id="3.1.1.61" evidence="1"/>
<dbReference type="EC" id="3.5.1.44" evidence="1"/>
<dbReference type="EMBL" id="AE000783">
    <property type="protein sequence ID" value="AAC66934.1"/>
    <property type="molecule type" value="Genomic_DNA"/>
</dbReference>
<dbReference type="EMBL" id="U60236">
    <property type="protein sequence ID" value="AAB57772.1"/>
    <property type="molecule type" value="Genomic_DNA"/>
</dbReference>
<dbReference type="PIR" id="G70170">
    <property type="entry name" value="G70170"/>
</dbReference>
<dbReference type="RefSeq" id="NP_212702.1">
    <property type="nucleotide sequence ID" value="NC_001318.1"/>
</dbReference>
<dbReference type="RefSeq" id="WP_002557156.1">
    <property type="nucleotide sequence ID" value="NC_001318.1"/>
</dbReference>
<dbReference type="SMR" id="Q45047"/>
<dbReference type="STRING" id="224326.BB_0568"/>
<dbReference type="PaxDb" id="224326-BB_0568"/>
<dbReference type="EnsemblBacteria" id="AAC66934">
    <property type="protein sequence ID" value="AAC66934"/>
    <property type="gene ID" value="BB_0568"/>
</dbReference>
<dbReference type="KEGG" id="bbu:BB_0568"/>
<dbReference type="PATRIC" id="fig|224326.49.peg.959"/>
<dbReference type="HOGENOM" id="CLU_000445_51_0_12"/>
<dbReference type="OrthoDB" id="9793421at2"/>
<dbReference type="Proteomes" id="UP000001807">
    <property type="component" value="Chromosome"/>
</dbReference>
<dbReference type="GO" id="GO:0005737">
    <property type="term" value="C:cytoplasm"/>
    <property type="evidence" value="ECO:0007669"/>
    <property type="project" value="UniProtKB-SubCell"/>
</dbReference>
<dbReference type="GO" id="GO:0000156">
    <property type="term" value="F:phosphorelay response regulator activity"/>
    <property type="evidence" value="ECO:0007669"/>
    <property type="project" value="InterPro"/>
</dbReference>
<dbReference type="GO" id="GO:0008984">
    <property type="term" value="F:protein-glutamate methylesterase activity"/>
    <property type="evidence" value="ECO:0007669"/>
    <property type="project" value="UniProtKB-UniRule"/>
</dbReference>
<dbReference type="GO" id="GO:0050568">
    <property type="term" value="F:protein-glutamine glutaminase activity"/>
    <property type="evidence" value="ECO:0007669"/>
    <property type="project" value="UniProtKB-UniRule"/>
</dbReference>
<dbReference type="GO" id="GO:0006935">
    <property type="term" value="P:chemotaxis"/>
    <property type="evidence" value="ECO:0007669"/>
    <property type="project" value="UniProtKB-UniRule"/>
</dbReference>
<dbReference type="CDD" id="cd16432">
    <property type="entry name" value="CheB_Rec"/>
    <property type="match status" value="1"/>
</dbReference>
<dbReference type="Gene3D" id="3.40.50.180">
    <property type="entry name" value="Methylesterase CheB, C-terminal domain"/>
    <property type="match status" value="1"/>
</dbReference>
<dbReference type="HAMAP" id="MF_00099">
    <property type="entry name" value="CheB_chemtxs"/>
    <property type="match status" value="1"/>
</dbReference>
<dbReference type="InterPro" id="IPR008248">
    <property type="entry name" value="CheB-like"/>
</dbReference>
<dbReference type="InterPro" id="IPR035909">
    <property type="entry name" value="CheB_C"/>
</dbReference>
<dbReference type="InterPro" id="IPR000673">
    <property type="entry name" value="Sig_transdc_resp-reg_Me-estase"/>
</dbReference>
<dbReference type="PANTHER" id="PTHR42872">
    <property type="entry name" value="PROTEIN-GLUTAMATE METHYLESTERASE/PROTEIN-GLUTAMINE GLUTAMINASE"/>
    <property type="match status" value="1"/>
</dbReference>
<dbReference type="PANTHER" id="PTHR42872:SF6">
    <property type="entry name" value="PROTEIN-GLUTAMATE METHYLESTERASE_PROTEIN-GLUTAMINE GLUTAMINASE"/>
    <property type="match status" value="1"/>
</dbReference>
<dbReference type="Pfam" id="PF01339">
    <property type="entry name" value="CheB_methylest"/>
    <property type="match status" value="1"/>
</dbReference>
<dbReference type="PIRSF" id="PIRSF000876">
    <property type="entry name" value="RR_chemtxs_CheB"/>
    <property type="match status" value="1"/>
</dbReference>
<dbReference type="SUPFAM" id="SSF52738">
    <property type="entry name" value="Methylesterase CheB, C-terminal domain"/>
    <property type="match status" value="1"/>
</dbReference>
<dbReference type="PROSITE" id="PS50122">
    <property type="entry name" value="CHEB"/>
    <property type="match status" value="1"/>
</dbReference>
<gene>
    <name evidence="1" type="primary">cheB</name>
    <name type="ordered locus">BB_0568</name>
</gene>
<reference key="1">
    <citation type="journal article" date="1997" name="Nature">
        <title>Genomic sequence of a Lyme disease spirochaete, Borrelia burgdorferi.</title>
        <authorList>
            <person name="Fraser C.M."/>
            <person name="Casjens S."/>
            <person name="Huang W.M."/>
            <person name="Sutton G.G."/>
            <person name="Clayton R.A."/>
            <person name="Lathigra R."/>
            <person name="White O."/>
            <person name="Ketchum K.A."/>
            <person name="Dodson R.J."/>
            <person name="Hickey E.K."/>
            <person name="Gwinn M.L."/>
            <person name="Dougherty B.A."/>
            <person name="Tomb J.-F."/>
            <person name="Fleischmann R.D."/>
            <person name="Richardson D.L."/>
            <person name="Peterson J.D."/>
            <person name="Kerlavage A.R."/>
            <person name="Quackenbush J."/>
            <person name="Salzberg S.L."/>
            <person name="Hanson M."/>
            <person name="van Vugt R."/>
            <person name="Palmer N."/>
            <person name="Adams M.D."/>
            <person name="Gocayne J.D."/>
            <person name="Weidman J.F."/>
            <person name="Utterback T.R."/>
            <person name="Watthey L."/>
            <person name="McDonald L.A."/>
            <person name="Artiach P."/>
            <person name="Bowman C."/>
            <person name="Garland S.A."/>
            <person name="Fujii C."/>
            <person name="Cotton M.D."/>
            <person name="Horst K."/>
            <person name="Roberts K.M."/>
            <person name="Hatch B."/>
            <person name="Smith H.O."/>
            <person name="Venter J.C."/>
        </authorList>
    </citation>
    <scope>NUCLEOTIDE SEQUENCE [LARGE SCALE GENOMIC DNA]</scope>
    <source>
        <strain>ATCC 35210 / DSM 4680 / CIP 102532 / B31</strain>
    </source>
</reference>
<reference key="2">
    <citation type="submission" date="1996-06" db="EMBL/GenBank/DDBJ databases">
        <title>Cloning and sequence analysis of a response regulator from B.burgdorferi the causative agent of Lyme disease.</title>
        <authorList>
            <person name="Gebreyesus K.H."/>
            <person name="Schwartz I.S."/>
        </authorList>
    </citation>
    <scope>NUCLEOTIDE SEQUENCE [GENOMIC DNA] OF 1-64</scope>
    <source>
        <strain>ATCC 35210 / DSM 4680 / CIP 102532 / B31</strain>
    </source>
</reference>
<protein>
    <recommendedName>
        <fullName evidence="1">Protein-glutamate methylesterase/protein-glutamine glutaminase</fullName>
        <ecNumber evidence="1">3.1.1.61</ecNumber>
        <ecNumber evidence="1">3.5.1.44</ecNumber>
    </recommendedName>
</protein>
<accession>Q45047</accession>
<feature type="chain" id="PRO_0000157979" description="Protein-glutamate methylesterase/protein-glutamine glutaminase">
    <location>
        <begin position="1"/>
        <end position="385"/>
    </location>
</feature>
<feature type="domain" description="CheB-type methylesterase" evidence="1">
    <location>
        <begin position="196"/>
        <end position="385"/>
    </location>
</feature>
<feature type="active site" evidence="1">
    <location>
        <position position="208"/>
    </location>
</feature>
<feature type="active site" evidence="1">
    <location>
        <position position="234"/>
    </location>
</feature>
<feature type="active site" evidence="1">
    <location>
        <position position="330"/>
    </location>
</feature>
<feature type="modified residue" description="4-aspartylphosphate" evidence="1">
    <location>
        <position position="53"/>
    </location>
</feature>
<proteinExistence type="inferred from homology"/>
<organism>
    <name type="scientific">Borreliella burgdorferi (strain ATCC 35210 / DSM 4680 / CIP 102532 / B31)</name>
    <name type="common">Borrelia burgdorferi</name>
    <dbReference type="NCBI Taxonomy" id="224326"/>
    <lineage>
        <taxon>Bacteria</taxon>
        <taxon>Pseudomonadati</taxon>
        <taxon>Spirochaetota</taxon>
        <taxon>Spirochaetia</taxon>
        <taxon>Spirochaetales</taxon>
        <taxon>Borreliaceae</taxon>
        <taxon>Borreliella</taxon>
    </lineage>
</organism>
<keyword id="KW-0145">Chemotaxis</keyword>
<keyword id="KW-0963">Cytoplasm</keyword>
<keyword id="KW-0378">Hydrolase</keyword>
<keyword id="KW-0597">Phosphoprotein</keyword>
<keyword id="KW-1185">Reference proteome</keyword>
<evidence type="ECO:0000255" key="1">
    <source>
        <dbReference type="HAMAP-Rule" id="MF_00099"/>
    </source>
</evidence>
<sequence length="385" mass="42691">MKILVIDIQGLIKQVFVRAFSKDNDVEILNAGFNSLNLINVFLQKFPDLVIIDENTARSNFGNSLNNVLNNISLPVVFIAQNEMLPNFGCLEQSKEKVKLIINKLNFKLTVDLFRSKYLALIKLELKNLGKNKLISSFEVKRIQAPDFSSNSKVELRENNLNDSSIRKSYRVSDVINFAPKNDPDVIIKYQGLINKHKTGKIIVVGSSTGGTEALRIFLRSFKKDSPPIIIVQHMPGGFTKSFAKNLNNEFNIDIKEAEDGDILRPGLVIIANGSYHLIVKYSSGNYFVNLLDGPLVSRHKPSVNVLFRSAAMYAGSNAIGVILTGMGDDGAVCMLEMKKNGAYTIAQDQETSVVFGMPMEAIKIGAVDKILPLSEIADHVLRRS</sequence>
<name>CHEB_BORBU</name>